<accession>C0JAY3</accession>
<proteinExistence type="evidence at transcript level"/>
<sequence length="273" mass="30524">WIMGHMVDAIAQIDEFVSLGANSIETDVSFDKNANPEYTYHGIPCDCGRTCTKWEYFNTFLGGLRKATTPGDSKYHEKLVLVVFDLKTGSLYDNQAYDAGTKLAKSLLQNYWNKGNNGGRACIVLSIPNLDHYKLITGFKETLTKEEHPELMDKVGYDFSGNDDIGDVAKAYKKAGVTGHVWQSDGITNCLLRGLDRVRKAVANRDSSNGYINKVYYWTVDKRASTRDALDAGVDGIMTNYPDVIADVLSESAYTAKFRIATYDDNPWETFKN</sequence>
<keyword id="KW-0204">Cytolysis</keyword>
<keyword id="KW-1061">Dermonecrotic toxin</keyword>
<keyword id="KW-1015">Disulfide bond</keyword>
<keyword id="KW-0354">Hemolysis</keyword>
<keyword id="KW-0442">Lipid degradation</keyword>
<keyword id="KW-0443">Lipid metabolism</keyword>
<keyword id="KW-0456">Lyase</keyword>
<keyword id="KW-0460">Magnesium</keyword>
<keyword id="KW-0479">Metal-binding</keyword>
<keyword id="KW-0964">Secreted</keyword>
<keyword id="KW-0800">Toxin</keyword>
<reference key="1">
    <citation type="journal article" date="2009" name="Mol. Biol. Evol.">
        <title>Molecular evolution, functional variation, and proposed nomenclature of the gene family that includes sphingomyelinase D in sicariid spider venoms.</title>
        <authorList>
            <person name="Binford G.J."/>
            <person name="Bodner M.R."/>
            <person name="Cordes M.H."/>
            <person name="Baldwin K.L."/>
            <person name="Rynerson M.R."/>
            <person name="Burns S.N."/>
            <person name="Zobel-Thropp P.A."/>
        </authorList>
    </citation>
    <scope>NUCLEOTIDE SEQUENCE [MRNA]</scope>
    <scope>NOMENCLATURE</scope>
    <source>
        <tissue>Venom gland</tissue>
    </source>
</reference>
<protein>
    <recommendedName>
        <fullName evidence="6">Dermonecrotic toxin LsaSicTox-alphaIB1bii</fullName>
        <ecNumber evidence="4">4.6.1.-</ecNumber>
    </recommendedName>
    <alternativeName>
        <fullName>Phospholipase D</fullName>
        <shortName>PLD</shortName>
    </alternativeName>
    <alternativeName>
        <fullName>Sphingomyelin phosphodiesterase D</fullName>
        <shortName>SMD</shortName>
        <shortName>SMase D</shortName>
        <shortName>Sphingomyelinase D</shortName>
    </alternativeName>
</protein>
<feature type="chain" id="PRO_0000392787" description="Dermonecrotic toxin LsaSicTox-alphaIB1bii">
    <location>
        <begin position="1" status="less than"/>
        <end position="273"/>
    </location>
</feature>
<feature type="active site" evidence="5">
    <location>
        <position position="5"/>
    </location>
</feature>
<feature type="active site" description="Nucleophile" evidence="5">
    <location>
        <position position="41"/>
    </location>
</feature>
<feature type="binding site" evidence="5">
    <location>
        <position position="25"/>
    </location>
    <ligand>
        <name>Mg(2+)</name>
        <dbReference type="ChEBI" id="CHEBI:18420"/>
    </ligand>
</feature>
<feature type="binding site" evidence="5">
    <location>
        <position position="27"/>
    </location>
    <ligand>
        <name>Mg(2+)</name>
        <dbReference type="ChEBI" id="CHEBI:18420"/>
    </ligand>
</feature>
<feature type="binding site" evidence="5">
    <location>
        <position position="85"/>
    </location>
    <ligand>
        <name>Mg(2+)</name>
        <dbReference type="ChEBI" id="CHEBI:18420"/>
    </ligand>
</feature>
<feature type="disulfide bond" evidence="3">
    <location>
        <begin position="45"/>
        <end position="51"/>
    </location>
</feature>
<feature type="disulfide bond" evidence="3">
    <location>
        <begin position="47"/>
        <end position="190"/>
    </location>
</feature>
<feature type="non-terminal residue">
    <location>
        <position position="1"/>
    </location>
</feature>
<comment type="function">
    <text evidence="1 3">Dermonecrotic toxins cleave the phosphodiester linkage between the phosphate and headgroup of certain phospholipids (sphingolipid and lysolipid substrates), forming an alcohol (often choline) and a cyclic phosphate (By similarity). This toxin acts on sphingomyelin (SM) (By similarity). It may also act on ceramide phosphoethanolamine (CPE), lysophosphatidylcholine (LPC) and lysophosphatidylethanolamine (LPE), but not on lysophosphatidylserine (LPS), and lysophosphatidylglycerol (LPG) (By similarity). It acts by transphosphatidylation, releasing exclusively cyclic phosphate products as second products (By similarity). Induces dermonecrosis, hemolysis, increased vascular permeability, edema, inflammatory response, and platelet aggregation (By similarity).</text>
</comment>
<comment type="catalytic activity">
    <reaction evidence="1">
        <text>an N-(acyl)-sphingosylphosphocholine = an N-(acyl)-sphingosyl-1,3-cyclic phosphate + choline</text>
        <dbReference type="Rhea" id="RHEA:60652"/>
        <dbReference type="ChEBI" id="CHEBI:15354"/>
        <dbReference type="ChEBI" id="CHEBI:64583"/>
        <dbReference type="ChEBI" id="CHEBI:143892"/>
    </reaction>
</comment>
<comment type="catalytic activity">
    <reaction evidence="1">
        <text>an N-(acyl)-sphingosylphosphoethanolamine = an N-(acyl)-sphingosyl-1,3-cyclic phosphate + ethanolamine</text>
        <dbReference type="Rhea" id="RHEA:60648"/>
        <dbReference type="ChEBI" id="CHEBI:57603"/>
        <dbReference type="ChEBI" id="CHEBI:143891"/>
        <dbReference type="ChEBI" id="CHEBI:143892"/>
    </reaction>
</comment>
<comment type="catalytic activity">
    <reaction evidence="1">
        <text>a 1-acyl-sn-glycero-3-phosphocholine = a 1-acyl-sn-glycero-2,3-cyclic phosphate + choline</text>
        <dbReference type="Rhea" id="RHEA:60700"/>
        <dbReference type="ChEBI" id="CHEBI:15354"/>
        <dbReference type="ChEBI" id="CHEBI:58168"/>
        <dbReference type="ChEBI" id="CHEBI:143947"/>
    </reaction>
</comment>
<comment type="catalytic activity">
    <reaction evidence="1">
        <text>a 1-acyl-sn-glycero-3-phosphoethanolamine = a 1-acyl-sn-glycero-2,3-cyclic phosphate + ethanolamine</text>
        <dbReference type="Rhea" id="RHEA:60704"/>
        <dbReference type="ChEBI" id="CHEBI:57603"/>
        <dbReference type="ChEBI" id="CHEBI:64381"/>
        <dbReference type="ChEBI" id="CHEBI:143947"/>
    </reaction>
</comment>
<comment type="cofactor">
    <cofactor evidence="5">
        <name>Mg(2+)</name>
        <dbReference type="ChEBI" id="CHEBI:18420"/>
    </cofactor>
    <text evidence="5">Binds 1 Mg(2+) ion per subunit.</text>
</comment>
<comment type="subcellular location">
    <subcellularLocation>
        <location evidence="8">Secreted</location>
    </subcellularLocation>
</comment>
<comment type="tissue specificity">
    <text evidence="8">Expressed by the venom gland.</text>
</comment>
<comment type="similarity">
    <text evidence="7">Belongs to the arthropod phospholipase D family. Class II subfamily.</text>
</comment>
<comment type="caution">
    <text evidence="1 2 4">The most common activity assay for dermonecrotic toxins detects enzymatic activity by monitoring choline release from substrate. Liberation of choline from sphingomyelin (SM) or lysophosphatidylcholine (LPC) is commonly assumed to result from substrate hydrolysis, giving either ceramide-1-phosphate (C1P) or lysophosphatidic acid (LPA), respectively, as a second product. However, two studies from Lajoie and colleagues (2013 and 2015) report the observation of exclusive formation of cyclic phosphate products as second products, resulting from intramolecular transphosphatidylation. Cyclic phosphates have vastly different biological properties from their monoester counterparts, and they may be relevant to the pathology of brown spider envenomation.</text>
</comment>
<dbReference type="EC" id="4.6.1.-" evidence="4"/>
<dbReference type="EMBL" id="FJ171418">
    <property type="protein sequence ID" value="ACN48914.1"/>
    <property type="molecule type" value="mRNA"/>
</dbReference>
<dbReference type="SMR" id="C0JAY3"/>
<dbReference type="GO" id="GO:0005576">
    <property type="term" value="C:extracellular region"/>
    <property type="evidence" value="ECO:0007669"/>
    <property type="project" value="UniProtKB-SubCell"/>
</dbReference>
<dbReference type="GO" id="GO:0016829">
    <property type="term" value="F:lyase activity"/>
    <property type="evidence" value="ECO:0007669"/>
    <property type="project" value="UniProtKB-KW"/>
</dbReference>
<dbReference type="GO" id="GO:0046872">
    <property type="term" value="F:metal ion binding"/>
    <property type="evidence" value="ECO:0007669"/>
    <property type="project" value="UniProtKB-KW"/>
</dbReference>
<dbReference type="GO" id="GO:0008081">
    <property type="term" value="F:phosphoric diester hydrolase activity"/>
    <property type="evidence" value="ECO:0007669"/>
    <property type="project" value="InterPro"/>
</dbReference>
<dbReference type="GO" id="GO:0090729">
    <property type="term" value="F:toxin activity"/>
    <property type="evidence" value="ECO:0007669"/>
    <property type="project" value="UniProtKB-KW"/>
</dbReference>
<dbReference type="GO" id="GO:0031640">
    <property type="term" value="P:killing of cells of another organism"/>
    <property type="evidence" value="ECO:0007669"/>
    <property type="project" value="UniProtKB-KW"/>
</dbReference>
<dbReference type="GO" id="GO:0016042">
    <property type="term" value="P:lipid catabolic process"/>
    <property type="evidence" value="ECO:0007669"/>
    <property type="project" value="UniProtKB-KW"/>
</dbReference>
<dbReference type="CDD" id="cd08576">
    <property type="entry name" value="GDPD_like_SMaseD_PLD"/>
    <property type="match status" value="1"/>
</dbReference>
<dbReference type="Gene3D" id="3.20.20.190">
    <property type="entry name" value="Phosphatidylinositol (PI) phosphodiesterase"/>
    <property type="match status" value="1"/>
</dbReference>
<dbReference type="InterPro" id="IPR017946">
    <property type="entry name" value="PLC-like_Pdiesterase_TIM-brl"/>
</dbReference>
<dbReference type="Pfam" id="PF13653">
    <property type="entry name" value="GDPD_2"/>
    <property type="match status" value="1"/>
</dbReference>
<dbReference type="SUPFAM" id="SSF51695">
    <property type="entry name" value="PLC-like phosphodiesterases"/>
    <property type="match status" value="1"/>
</dbReference>
<organism>
    <name type="scientific">Loxosceles sabina</name>
    <name type="common">Tucson recluse spider</name>
    <dbReference type="NCBI Taxonomy" id="571529"/>
    <lineage>
        <taxon>Eukaryota</taxon>
        <taxon>Metazoa</taxon>
        <taxon>Ecdysozoa</taxon>
        <taxon>Arthropoda</taxon>
        <taxon>Chelicerata</taxon>
        <taxon>Arachnida</taxon>
        <taxon>Araneae</taxon>
        <taxon>Araneomorphae</taxon>
        <taxon>Haplogynae</taxon>
        <taxon>Scytodoidea</taxon>
        <taxon>Sicariidae</taxon>
        <taxon>Loxosceles</taxon>
    </lineage>
</organism>
<evidence type="ECO:0000250" key="1">
    <source>
        <dbReference type="UniProtKB" id="A0A0D4WTV1"/>
    </source>
</evidence>
<evidence type="ECO:0000250" key="2">
    <source>
        <dbReference type="UniProtKB" id="A0A0D4WV12"/>
    </source>
</evidence>
<evidence type="ECO:0000250" key="3">
    <source>
        <dbReference type="UniProtKB" id="P0CE80"/>
    </source>
</evidence>
<evidence type="ECO:0000250" key="4">
    <source>
        <dbReference type="UniProtKB" id="Q4ZFU2"/>
    </source>
</evidence>
<evidence type="ECO:0000250" key="5">
    <source>
        <dbReference type="UniProtKB" id="Q8I914"/>
    </source>
</evidence>
<evidence type="ECO:0000303" key="6">
    <source>
    </source>
</evidence>
<evidence type="ECO:0000305" key="7"/>
<evidence type="ECO:0000305" key="8">
    <source>
    </source>
</evidence>
<name>A1KB2_LOXSA</name>